<gene>
    <name evidence="2" type="primary">sigA</name>
    <name type="synonym">plaC</name>
    <name type="synonym">rpoD</name>
    <name type="ordered locus">SAOUHSC_01662</name>
</gene>
<evidence type="ECO:0000250" key="1"/>
<evidence type="ECO:0000255" key="2">
    <source>
        <dbReference type="HAMAP-Rule" id="MF_00963"/>
    </source>
</evidence>
<evidence type="ECO:0000256" key="3">
    <source>
        <dbReference type="SAM" id="MobiDB-lite"/>
    </source>
</evidence>
<evidence type="ECO:0000269" key="4">
    <source>
    </source>
</evidence>
<evidence type="ECO:0007829" key="5">
    <source>
        <dbReference type="PDB" id="4G6D"/>
    </source>
</evidence>
<keyword id="KW-0002">3D-structure</keyword>
<keyword id="KW-0963">Cytoplasm</keyword>
<keyword id="KW-0238">DNA-binding</keyword>
<keyword id="KW-1185">Reference proteome</keyword>
<keyword id="KW-0731">Sigma factor</keyword>
<keyword id="KW-0804">Transcription</keyword>
<keyword id="KW-0805">Transcription regulation</keyword>
<proteinExistence type="evidence at protein level"/>
<organism>
    <name type="scientific">Staphylococcus aureus (strain NCTC 8325 / PS 47)</name>
    <dbReference type="NCBI Taxonomy" id="93061"/>
    <lineage>
        <taxon>Bacteria</taxon>
        <taxon>Bacillati</taxon>
        <taxon>Bacillota</taxon>
        <taxon>Bacilli</taxon>
        <taxon>Bacillales</taxon>
        <taxon>Staphylococcaceae</taxon>
        <taxon>Staphylococcus</taxon>
    </lineage>
</organism>
<accession>P0A0J0</accession>
<accession>P26766</accession>
<accession>Q2FY12</accession>
<dbReference type="EMBL" id="M63177">
    <property type="protein sequence ID" value="AAB59090.1"/>
    <property type="molecule type" value="Genomic_DNA"/>
</dbReference>
<dbReference type="EMBL" id="CP000253">
    <property type="protein sequence ID" value="ABD30737.1"/>
    <property type="molecule type" value="Genomic_DNA"/>
</dbReference>
<dbReference type="PIR" id="S34442">
    <property type="entry name" value="S34442"/>
</dbReference>
<dbReference type="RefSeq" id="WP_001283055.1">
    <property type="nucleotide sequence ID" value="NZ_LS483365.1"/>
</dbReference>
<dbReference type="RefSeq" id="YP_500173.1">
    <property type="nucleotide sequence ID" value="NC_007795.1"/>
</dbReference>
<dbReference type="PDB" id="4G6D">
    <property type="method" value="X-ray"/>
    <property type="resolution" value="2.00 A"/>
    <property type="chains" value="A=297-368"/>
</dbReference>
<dbReference type="PDB" id="4G8X">
    <property type="method" value="X-ray"/>
    <property type="resolution" value="3.00 A"/>
    <property type="chains" value="A/C=297-357"/>
</dbReference>
<dbReference type="PDB" id="4G94">
    <property type="method" value="X-ray"/>
    <property type="resolution" value="2.00 A"/>
    <property type="chains" value="A=297-357"/>
</dbReference>
<dbReference type="PDB" id="8X6F">
    <property type="method" value="EM"/>
    <property type="resolution" value="3.70 A"/>
    <property type="chains" value="E=1-368"/>
</dbReference>
<dbReference type="PDBsum" id="4G6D"/>
<dbReference type="PDBsum" id="4G8X"/>
<dbReference type="PDBsum" id="4G94"/>
<dbReference type="PDBsum" id="8X6F"/>
<dbReference type="SMR" id="P0A0J0"/>
<dbReference type="STRING" id="93061.SAOUHSC_01662"/>
<dbReference type="PaxDb" id="1280-SAXN108_1583"/>
<dbReference type="GeneID" id="3920074"/>
<dbReference type="GeneID" id="98345932"/>
<dbReference type="KEGG" id="sao:SAOUHSC_01662"/>
<dbReference type="PATRIC" id="fig|93061.5.peg.1512"/>
<dbReference type="eggNOG" id="COG0568">
    <property type="taxonomic scope" value="Bacteria"/>
</dbReference>
<dbReference type="HOGENOM" id="CLU_014793_3_3_9"/>
<dbReference type="OrthoDB" id="9809557at2"/>
<dbReference type="EvolutionaryTrace" id="P0A0J0"/>
<dbReference type="PRO" id="PR:P0A0J0"/>
<dbReference type="Proteomes" id="UP000008816">
    <property type="component" value="Chromosome"/>
</dbReference>
<dbReference type="GO" id="GO:0005737">
    <property type="term" value="C:cytoplasm"/>
    <property type="evidence" value="ECO:0007669"/>
    <property type="project" value="UniProtKB-SubCell"/>
</dbReference>
<dbReference type="GO" id="GO:0003677">
    <property type="term" value="F:DNA binding"/>
    <property type="evidence" value="ECO:0007669"/>
    <property type="project" value="UniProtKB-UniRule"/>
</dbReference>
<dbReference type="GO" id="GO:0016987">
    <property type="term" value="F:sigma factor activity"/>
    <property type="evidence" value="ECO:0007669"/>
    <property type="project" value="UniProtKB-UniRule"/>
</dbReference>
<dbReference type="GO" id="GO:0006352">
    <property type="term" value="P:DNA-templated transcription initiation"/>
    <property type="evidence" value="ECO:0007669"/>
    <property type="project" value="UniProtKB-UniRule"/>
</dbReference>
<dbReference type="CDD" id="cd06171">
    <property type="entry name" value="Sigma70_r4"/>
    <property type="match status" value="1"/>
</dbReference>
<dbReference type="FunFam" id="1.10.10.10:FF:000002">
    <property type="entry name" value="RNA polymerase sigma factor SigA"/>
    <property type="match status" value="1"/>
</dbReference>
<dbReference type="FunFam" id="1.10.10.10:FF:000004">
    <property type="entry name" value="RNA polymerase sigma factor SigA"/>
    <property type="match status" value="1"/>
</dbReference>
<dbReference type="FunFam" id="1.10.601.10:FF:000001">
    <property type="entry name" value="RNA polymerase sigma factor SigA"/>
    <property type="match status" value="1"/>
</dbReference>
<dbReference type="Gene3D" id="1.10.601.10">
    <property type="entry name" value="RNA Polymerase Primary Sigma Factor"/>
    <property type="match status" value="2"/>
</dbReference>
<dbReference type="Gene3D" id="1.10.220.120">
    <property type="entry name" value="Sigma-70 factor, region 1.1"/>
    <property type="match status" value="1"/>
</dbReference>
<dbReference type="Gene3D" id="1.10.10.10">
    <property type="entry name" value="Winged helix-like DNA-binding domain superfamily/Winged helix DNA-binding domain"/>
    <property type="match status" value="2"/>
</dbReference>
<dbReference type="HAMAP" id="MF_00963">
    <property type="entry name" value="Sigma70_RpoD_SigA"/>
    <property type="match status" value="1"/>
</dbReference>
<dbReference type="InterPro" id="IPR014284">
    <property type="entry name" value="RNA_pol_sigma-70_dom"/>
</dbReference>
<dbReference type="InterPro" id="IPR000943">
    <property type="entry name" value="RNA_pol_sigma70"/>
</dbReference>
<dbReference type="InterPro" id="IPR009042">
    <property type="entry name" value="RNA_pol_sigma70_r1_2"/>
</dbReference>
<dbReference type="InterPro" id="IPR007627">
    <property type="entry name" value="RNA_pol_sigma70_r2"/>
</dbReference>
<dbReference type="InterPro" id="IPR007624">
    <property type="entry name" value="RNA_pol_sigma70_r3"/>
</dbReference>
<dbReference type="InterPro" id="IPR007630">
    <property type="entry name" value="RNA_pol_sigma70_r4"/>
</dbReference>
<dbReference type="InterPro" id="IPR007127">
    <property type="entry name" value="RNA_pol_sigma_70_r1_1"/>
</dbReference>
<dbReference type="InterPro" id="IPR042189">
    <property type="entry name" value="RNA_pol_sigma_70_r1_1_sf"/>
</dbReference>
<dbReference type="InterPro" id="IPR013325">
    <property type="entry name" value="RNA_pol_sigma_r2"/>
</dbReference>
<dbReference type="InterPro" id="IPR013324">
    <property type="entry name" value="RNA_pol_sigma_r3/r4-like"/>
</dbReference>
<dbReference type="InterPro" id="IPR012760">
    <property type="entry name" value="RNA_pol_sigma_RpoD_C"/>
</dbReference>
<dbReference type="InterPro" id="IPR050239">
    <property type="entry name" value="Sigma-70_RNA_pol_init_factors"/>
</dbReference>
<dbReference type="InterPro" id="IPR028630">
    <property type="entry name" value="Sigma70_RpoD"/>
</dbReference>
<dbReference type="InterPro" id="IPR036388">
    <property type="entry name" value="WH-like_DNA-bd_sf"/>
</dbReference>
<dbReference type="NCBIfam" id="NF006666">
    <property type="entry name" value="PRK09210.1"/>
    <property type="match status" value="1"/>
</dbReference>
<dbReference type="NCBIfam" id="TIGR02393">
    <property type="entry name" value="RpoD_Cterm"/>
    <property type="match status" value="1"/>
</dbReference>
<dbReference type="NCBIfam" id="TIGR02937">
    <property type="entry name" value="sigma70-ECF"/>
    <property type="match status" value="1"/>
</dbReference>
<dbReference type="PANTHER" id="PTHR30603">
    <property type="entry name" value="RNA POLYMERASE SIGMA FACTOR RPO"/>
    <property type="match status" value="1"/>
</dbReference>
<dbReference type="PANTHER" id="PTHR30603:SF60">
    <property type="entry name" value="RNA POLYMERASE SIGMA FACTOR RPOD"/>
    <property type="match status" value="1"/>
</dbReference>
<dbReference type="Pfam" id="PF03979">
    <property type="entry name" value="Sigma70_r1_1"/>
    <property type="match status" value="1"/>
</dbReference>
<dbReference type="Pfam" id="PF00140">
    <property type="entry name" value="Sigma70_r1_2"/>
    <property type="match status" value="1"/>
</dbReference>
<dbReference type="Pfam" id="PF04542">
    <property type="entry name" value="Sigma70_r2"/>
    <property type="match status" value="1"/>
</dbReference>
<dbReference type="Pfam" id="PF04539">
    <property type="entry name" value="Sigma70_r3"/>
    <property type="match status" value="1"/>
</dbReference>
<dbReference type="Pfam" id="PF04545">
    <property type="entry name" value="Sigma70_r4"/>
    <property type="match status" value="1"/>
</dbReference>
<dbReference type="PRINTS" id="PR00046">
    <property type="entry name" value="SIGMA70FCT"/>
</dbReference>
<dbReference type="SUPFAM" id="SSF88946">
    <property type="entry name" value="Sigma2 domain of RNA polymerase sigma factors"/>
    <property type="match status" value="1"/>
</dbReference>
<dbReference type="SUPFAM" id="SSF88659">
    <property type="entry name" value="Sigma3 and sigma4 domains of RNA polymerase sigma factors"/>
    <property type="match status" value="2"/>
</dbReference>
<dbReference type="PROSITE" id="PS00715">
    <property type="entry name" value="SIGMA70_1"/>
    <property type="match status" value="1"/>
</dbReference>
<dbReference type="PROSITE" id="PS00716">
    <property type="entry name" value="SIGMA70_2"/>
    <property type="match status" value="1"/>
</dbReference>
<sequence length="368" mass="42171">MSDNTVKIKKQTIDPTLTLEDVKKQLIEKGKKEGHLSHEEIAEKLQNFDIDSDQMDDFFDQLNDNDISLVNEKDSSDTDEKLNPSDLSAPPGVKINDPVRMYLKEIGRVNLLSAQEEIELAKRIEQGDEVAKSRLAEANLRLVVSIAKRYVGRGMLFLDLIQEGNMGLIKAVEKFDFNKGFKFSTYATWWIRQAITRAIADQARTIRIPVHMVETINKLIRVQRQLLQDLGRDPAPEEIGEEMDLPAEKVREILKIAQEPVSLETPIGEEDDSHLGDFIEDQEAQSPSDHAAYELLKEQLEDVLDTLTDREENVLRLRFGLDDGRTRTLEEVGKVFGVTRERIRQIEAKALRKLRHPSRSKRLKDFMD</sequence>
<name>SIGA_STAA8</name>
<feature type="chain" id="PRO_0000093916" description="RNA polymerase sigma factor SigA">
    <location>
        <begin position="1"/>
        <end position="368"/>
    </location>
</feature>
<feature type="DNA-binding region" description="H-T-H motif" evidence="2">
    <location>
        <begin position="329"/>
        <end position="348"/>
    </location>
</feature>
<feature type="region of interest" description="Sigma-70 factor domain-1">
    <location>
        <begin position="16"/>
        <end position="90"/>
    </location>
</feature>
<feature type="region of interest" description="Disordered" evidence="3">
    <location>
        <begin position="69"/>
        <end position="90"/>
    </location>
</feature>
<feature type="region of interest" description="Sigma-70 factor domain-2">
    <location>
        <begin position="135"/>
        <end position="205"/>
    </location>
</feature>
<feature type="region of interest" description="Sigma-70 factor domain-3">
    <location>
        <begin position="214"/>
        <end position="291"/>
    </location>
</feature>
<feature type="region of interest" description="Sigma-70 factor domain-4">
    <location>
        <begin position="303"/>
        <end position="356"/>
    </location>
</feature>
<feature type="short sequence motif" description="Interaction with polymerase core subunit RpoC">
    <location>
        <begin position="159"/>
        <end position="162"/>
    </location>
</feature>
<feature type="compositionally biased region" description="Basic and acidic residues" evidence="3">
    <location>
        <begin position="71"/>
        <end position="83"/>
    </location>
</feature>
<feature type="sequence variant" description="In plaC1 mutation; results in a narrower specificity for promoters.">
    <original>P</original>
    <variation>S</variation>
    <location>
        <position position="209"/>
    </location>
</feature>
<feature type="helix" evidence="5">
    <location>
        <begin position="297"/>
        <end position="305"/>
    </location>
</feature>
<feature type="helix" evidence="5">
    <location>
        <begin position="309"/>
        <end position="319"/>
    </location>
</feature>
<feature type="turn" evidence="5">
    <location>
        <begin position="320"/>
        <end position="323"/>
    </location>
</feature>
<feature type="helix" evidence="5">
    <location>
        <begin position="329"/>
        <end position="336"/>
    </location>
</feature>
<feature type="helix" evidence="5">
    <location>
        <begin position="340"/>
        <end position="355"/>
    </location>
</feature>
<protein>
    <recommendedName>
        <fullName evidence="2">RNA polymerase sigma factor SigA</fullName>
    </recommendedName>
</protein>
<comment type="function">
    <text evidence="2 4">Sigma factors are initiation factors that promote the attachment of RNA polymerase to specific initiation sites and are then released. This sigma factor is the primary sigma factor during exponential growth.</text>
</comment>
<comment type="subunit">
    <text evidence="2 4">Interacts transiently with the RNA polymerase catalytic core formed by RpoA, RpoB, RpoC and RpoZ (2 alpha, 1 beta, 1 beta' and 1 omega subunit) to form the RNA polymerase holoenzyme that can initiate transcription (By similarity). Interacts (via sigma-70 factor domain 4) with the phage G1 protein gp67; this inhibits rRNA synthesis. Interaction with phage G1 protein gp67 does not inhibit transcription in general, but selectively inhibits transcription from promoters that require interaction of the RNA polymerase alpha subunit with DNA sequences upstream of the -35 promoter element.</text>
</comment>
<comment type="subcellular location">
    <subcellularLocation>
        <location evidence="2">Cytoplasm</location>
    </subcellularLocation>
</comment>
<comment type="domain">
    <text evidence="1">Contains 4 domains, connected by flexible linkers. In the active conformation, the domains are in an extended conformation, each making extensive interactions with the RNA polymerase catalytic core (By similarity).</text>
</comment>
<comment type="domain">
    <text evidence="1">In the autoinhibited state, sigma-70 factor domain-1 packs closely together with sigma-70 factor domains-2 and -4, contrary to the extended conformation that is seen when the protein is part of the RNA polymerase holoenzyme.</text>
</comment>
<comment type="domain">
    <text evidence="1">The sigma-70 factor domain-2 mediates sequence-specific interaction with the -10 element in promoter DNA, and plays an important role in melting the double-stranded DNA and the formation of the transcription bubble. The sigma-70 factor domain-2 mediates interaction with the RNA polymerase subunits RpoB and RpoC (By similarity).</text>
</comment>
<comment type="domain">
    <text evidence="1">The sigma-70 factor domain-4 contains a helix-turn-helix (H-T-H) motif that mediates interaction with the -35 element in promoter DNA. The domain also mediates interaction with the RNA polymerase subunit RpoA. Interactions between sigma-70 factor domain-4 and anti-sigma factors prevents interaction of sigma factors with the RNA polymerase catalytic core (By similarity).</text>
</comment>
<comment type="similarity">
    <text evidence="2">Belongs to the sigma-70 factor family. RpoD/SigA subfamily.</text>
</comment>
<reference key="1">
    <citation type="journal article" date="1991" name="Nucleic Acids Res.">
        <title>The Staphylococcus aureus chromosomal gene plaC, identified by mutations amplifying plasmid pT181, encodes a sigma factor.</title>
        <authorList>
            <person name="Basheer R."/>
            <person name="Iordanescu S."/>
        </authorList>
    </citation>
    <scope>NUCLEOTIDE SEQUENCE [GENOMIC DNA]</scope>
</reference>
<reference key="2">
    <citation type="book" date="2006" name="Gram positive pathogens, 2nd edition">
        <title>The Staphylococcus aureus NCTC 8325 genome.</title>
        <editorList>
            <person name="Fischetti V."/>
            <person name="Novick R."/>
            <person name="Ferretti J."/>
            <person name="Portnoy D."/>
            <person name="Rood J."/>
        </editorList>
        <authorList>
            <person name="Gillaspy A.F."/>
            <person name="Worrell V."/>
            <person name="Orvis J."/>
            <person name="Roe B.A."/>
            <person name="Dyer D.W."/>
            <person name="Iandolo J.J."/>
        </authorList>
    </citation>
    <scope>NUCLEOTIDE SEQUENCE [LARGE SCALE GENOMIC DNA]</scope>
    <source>
        <strain>NCTC 8325 / PS 47</strain>
    </source>
</reference>
<reference key="3">
    <citation type="journal article" date="2012" name="Cell">
        <title>Promoter-specific transcription inhibition in Staphylococcus aureus by a phage protein.</title>
        <authorList>
            <person name="Osmundson J."/>
            <person name="Montero-Diez C."/>
            <person name="Westblade L.F."/>
            <person name="Hochschild A."/>
            <person name="Darst S.A."/>
        </authorList>
    </citation>
    <scope>X-RAY CRYSTALLOGRAPHY (2.0 ANGSTROMS) OF 297-368 IN COMPLEX WITH PHAGE PROTEIN GP67</scope>
    <scope>FUNCTION</scope>
    <scope>SUBUNIT</scope>
</reference>